<sequence>MGVFMEKLKTYLELIRVKNCITASIGGIIGYLISSNFEIDILKSLLVFFVVFFVCAYGNVINDIFDIEIDRINKPSRPLPSGKIKLNEAKKFSAILLILGLVLSLFINIYALIIAVINALFLYLYAKKYKKYKPIGNFIIGYLTGSVFLFGGVAGKNVMPVVILFLCSLLSIWGREIVKDFEDMEGDKKEGVISLPIKYGKKSLYFATFLVVLAVILSPLPYILKIFGIWYLILIAICDILFIYAMALLLKEPNKETASKVSKFLKIIMNIVLLAFIVGAIKL</sequence>
<reference key="1">
    <citation type="journal article" date="1996" name="Science">
        <title>Complete genome sequence of the methanogenic archaeon, Methanococcus jannaschii.</title>
        <authorList>
            <person name="Bult C.J."/>
            <person name="White O."/>
            <person name="Olsen G.J."/>
            <person name="Zhou L."/>
            <person name="Fleischmann R.D."/>
            <person name="Sutton G.G."/>
            <person name="Blake J.A."/>
            <person name="FitzGerald L.M."/>
            <person name="Clayton R.A."/>
            <person name="Gocayne J.D."/>
            <person name="Kerlavage A.R."/>
            <person name="Dougherty B.A."/>
            <person name="Tomb J.-F."/>
            <person name="Adams M.D."/>
            <person name="Reich C.I."/>
            <person name="Overbeek R."/>
            <person name="Kirkness E.F."/>
            <person name="Weinstock K.G."/>
            <person name="Merrick J.M."/>
            <person name="Glodek A."/>
            <person name="Scott J.L."/>
            <person name="Geoghagen N.S.M."/>
            <person name="Weidman J.F."/>
            <person name="Fuhrmann J.L."/>
            <person name="Nguyen D."/>
            <person name="Utterback T.R."/>
            <person name="Kelley J.M."/>
            <person name="Peterson J.D."/>
            <person name="Sadow P.W."/>
            <person name="Hanna M.C."/>
            <person name="Cotton M.D."/>
            <person name="Roberts K.M."/>
            <person name="Hurst M.A."/>
            <person name="Kaine B.P."/>
            <person name="Borodovsky M."/>
            <person name="Klenk H.-P."/>
            <person name="Fraser C.M."/>
            <person name="Smith H.O."/>
            <person name="Woese C.R."/>
            <person name="Venter J.C."/>
        </authorList>
    </citation>
    <scope>NUCLEOTIDE SEQUENCE [LARGE SCALE GENOMIC DNA]</scope>
    <source>
        <strain>ATCC 43067 / DSM 2661 / JAL-1 / JCM 10045 / NBRC 100440</strain>
    </source>
</reference>
<dbReference type="EC" id="2.5.1.42" evidence="1"/>
<dbReference type="EMBL" id="L77117">
    <property type="protein sequence ID" value="AAB98267.1"/>
    <property type="molecule type" value="Genomic_DNA"/>
</dbReference>
<dbReference type="PIR" id="H64334">
    <property type="entry name" value="H64334"/>
</dbReference>
<dbReference type="PDB" id="6M31">
    <property type="method" value="X-ray"/>
    <property type="resolution" value="2.30 A"/>
    <property type="chains" value="A/B=1-283"/>
</dbReference>
<dbReference type="PDB" id="6M34">
    <property type="method" value="X-ray"/>
    <property type="resolution" value="2.90 A"/>
    <property type="chains" value="A/B=1-283"/>
</dbReference>
<dbReference type="PDB" id="7BPU">
    <property type="method" value="X-ray"/>
    <property type="resolution" value="3.32 A"/>
    <property type="chains" value="A/B=1-283"/>
</dbReference>
<dbReference type="PDBsum" id="6M31"/>
<dbReference type="PDBsum" id="6M34"/>
<dbReference type="PDBsum" id="7BPU"/>
<dbReference type="SMR" id="Q57727"/>
<dbReference type="FunCoup" id="Q57727">
    <property type="interactions" value="93"/>
</dbReference>
<dbReference type="STRING" id="243232.MJ_0279"/>
<dbReference type="PaxDb" id="243232-MJ_0279"/>
<dbReference type="EnsemblBacteria" id="AAB98267">
    <property type="protein sequence ID" value="AAB98267"/>
    <property type="gene ID" value="MJ_0279"/>
</dbReference>
<dbReference type="KEGG" id="mja:MJ_0279"/>
<dbReference type="eggNOG" id="arCOG00476">
    <property type="taxonomic scope" value="Archaea"/>
</dbReference>
<dbReference type="HOGENOM" id="CLU_073311_1_1_2"/>
<dbReference type="InParanoid" id="Q57727"/>
<dbReference type="PhylomeDB" id="Q57727"/>
<dbReference type="UniPathway" id="UPA00940"/>
<dbReference type="Proteomes" id="UP000000805">
    <property type="component" value="Chromosome"/>
</dbReference>
<dbReference type="GO" id="GO:0005886">
    <property type="term" value="C:plasma membrane"/>
    <property type="evidence" value="ECO:0007669"/>
    <property type="project" value="UniProtKB-SubCell"/>
</dbReference>
<dbReference type="GO" id="GO:0047295">
    <property type="term" value="F:geranylgeranylglycerol-phosphate geranylgeranyltransferase activity"/>
    <property type="evidence" value="ECO:0007669"/>
    <property type="project" value="UniProtKB-UniRule"/>
</dbReference>
<dbReference type="GO" id="GO:0000287">
    <property type="term" value="F:magnesium ion binding"/>
    <property type="evidence" value="ECO:0007669"/>
    <property type="project" value="UniProtKB-UniRule"/>
</dbReference>
<dbReference type="GO" id="GO:0046474">
    <property type="term" value="P:glycerophospholipid biosynthetic process"/>
    <property type="evidence" value="ECO:0007669"/>
    <property type="project" value="UniProtKB-UniRule"/>
</dbReference>
<dbReference type="CDD" id="cd13961">
    <property type="entry name" value="PT_UbiA_DGGGPS"/>
    <property type="match status" value="1"/>
</dbReference>
<dbReference type="Gene3D" id="1.10.357.140">
    <property type="entry name" value="UbiA prenyltransferase"/>
    <property type="match status" value="1"/>
</dbReference>
<dbReference type="Gene3D" id="1.20.120.1780">
    <property type="entry name" value="UbiA prenyltransferase"/>
    <property type="match status" value="1"/>
</dbReference>
<dbReference type="HAMAP" id="MF_01286">
    <property type="entry name" value="DGGGP_synth"/>
    <property type="match status" value="1"/>
</dbReference>
<dbReference type="InterPro" id="IPR023547">
    <property type="entry name" value="DGGGP_synth"/>
</dbReference>
<dbReference type="InterPro" id="IPR050475">
    <property type="entry name" value="Prenyltransferase_related"/>
</dbReference>
<dbReference type="InterPro" id="IPR000537">
    <property type="entry name" value="UbiA_prenyltransferase"/>
</dbReference>
<dbReference type="InterPro" id="IPR044878">
    <property type="entry name" value="UbiA_sf"/>
</dbReference>
<dbReference type="NCBIfam" id="NF009521">
    <property type="entry name" value="PRK12882.1"/>
    <property type="match status" value="1"/>
</dbReference>
<dbReference type="PANTHER" id="PTHR42723">
    <property type="entry name" value="CHLOROPHYLL SYNTHASE"/>
    <property type="match status" value="1"/>
</dbReference>
<dbReference type="PANTHER" id="PTHR42723:SF1">
    <property type="entry name" value="CHLOROPHYLL SYNTHASE, CHLOROPLASTIC"/>
    <property type="match status" value="1"/>
</dbReference>
<dbReference type="Pfam" id="PF01040">
    <property type="entry name" value="UbiA"/>
    <property type="match status" value="1"/>
</dbReference>
<evidence type="ECO:0000255" key="1">
    <source>
        <dbReference type="HAMAP-Rule" id="MF_01286"/>
    </source>
</evidence>
<evidence type="ECO:0007829" key="2">
    <source>
        <dbReference type="PDB" id="6M31"/>
    </source>
</evidence>
<accession>Q57727</accession>
<proteinExistence type="evidence at protein level"/>
<feature type="chain" id="PRO_0000106770" description="Digeranylgeranylglyceryl phosphate synthase">
    <location>
        <begin position="1"/>
        <end position="283"/>
    </location>
</feature>
<feature type="transmembrane region" description="Helical" evidence="1">
    <location>
        <begin position="21"/>
        <end position="41"/>
    </location>
</feature>
<feature type="transmembrane region" description="Helical" evidence="1">
    <location>
        <begin position="45"/>
        <end position="65"/>
    </location>
</feature>
<feature type="transmembrane region" description="Helical" evidence="1">
    <location>
        <begin position="97"/>
        <end position="117"/>
    </location>
</feature>
<feature type="transmembrane region" description="Helical" evidence="1">
    <location>
        <begin position="135"/>
        <end position="155"/>
    </location>
</feature>
<feature type="transmembrane region" description="Helical" evidence="1">
    <location>
        <begin position="158"/>
        <end position="178"/>
    </location>
</feature>
<feature type="transmembrane region" description="Helical" evidence="1">
    <location>
        <begin position="204"/>
        <end position="224"/>
    </location>
</feature>
<feature type="transmembrane region" description="Helical" evidence="1">
    <location>
        <begin position="226"/>
        <end position="246"/>
    </location>
</feature>
<feature type="transmembrane region" description="Helical" evidence="1">
    <location>
        <begin position="261"/>
        <end position="281"/>
    </location>
</feature>
<feature type="helix" evidence="2">
    <location>
        <begin position="5"/>
        <end position="14"/>
    </location>
</feature>
<feature type="helix" evidence="2">
    <location>
        <begin position="17"/>
        <end position="35"/>
    </location>
</feature>
<feature type="helix" evidence="2">
    <location>
        <begin position="41"/>
        <end position="65"/>
    </location>
</feature>
<feature type="helix" evidence="2">
    <location>
        <begin position="67"/>
        <end position="72"/>
    </location>
</feature>
<feature type="turn" evidence="2">
    <location>
        <begin position="78"/>
        <end position="82"/>
    </location>
</feature>
<feature type="helix" evidence="2">
    <location>
        <begin position="86"/>
        <end position="104"/>
    </location>
</feature>
<feature type="turn" evidence="2">
    <location>
        <begin position="105"/>
        <end position="107"/>
    </location>
</feature>
<feature type="helix" evidence="2">
    <location>
        <begin position="109"/>
        <end position="127"/>
    </location>
</feature>
<feature type="turn" evidence="2">
    <location>
        <begin position="128"/>
        <end position="130"/>
    </location>
</feature>
<feature type="helix" evidence="2">
    <location>
        <begin position="133"/>
        <end position="152"/>
    </location>
</feature>
<feature type="helix" evidence="2">
    <location>
        <begin position="159"/>
        <end position="182"/>
    </location>
</feature>
<feature type="helix" evidence="2">
    <location>
        <begin position="184"/>
        <end position="188"/>
    </location>
</feature>
<feature type="turn" evidence="2">
    <location>
        <begin position="189"/>
        <end position="191"/>
    </location>
</feature>
<feature type="helix" evidence="2">
    <location>
        <begin position="195"/>
        <end position="199"/>
    </location>
</feature>
<feature type="helix" evidence="2">
    <location>
        <begin position="200"/>
        <end position="202"/>
    </location>
</feature>
<feature type="helix" evidence="2">
    <location>
        <begin position="203"/>
        <end position="217"/>
    </location>
</feature>
<feature type="helix" evidence="2">
    <location>
        <begin position="220"/>
        <end position="223"/>
    </location>
</feature>
<feature type="helix" evidence="2">
    <location>
        <begin position="229"/>
        <end position="251"/>
    </location>
</feature>
<feature type="helix" evidence="2">
    <location>
        <begin position="255"/>
        <end position="280"/>
    </location>
</feature>
<protein>
    <recommendedName>
        <fullName evidence="1">Digeranylgeranylglyceryl phosphate synthase</fullName>
        <shortName evidence="1">DGGGP synthase</shortName>
        <shortName evidence="1">DGGGPS</shortName>
        <ecNumber evidence="1">2.5.1.42</ecNumber>
    </recommendedName>
    <alternativeName>
        <fullName evidence="1">(S)-2,3-di-O-geranylgeranylglyceryl phosphate synthase</fullName>
    </alternativeName>
    <alternativeName>
        <fullName evidence="1">Geranylgeranylglycerol-phosphate geranylgeranyltransferase</fullName>
    </alternativeName>
</protein>
<name>DGGGP_METJA</name>
<comment type="function">
    <text evidence="1">Prenyltransferase that catalyzes the transfer of the geranylgeranyl moiety of geranylgeranyl diphosphate (GGPP) to the C2 hydroxyl of (S)-3-O-geranylgeranylglyceryl phosphate (GGGP). This reaction is the second ether-bond-formation step in the biosynthesis of archaeal membrane lipids.</text>
</comment>
<comment type="catalytic activity">
    <reaction evidence="1">
        <text>sn-3-O-(geranylgeranyl)glycerol 1-phosphate + (2E,6E,10E)-geranylgeranyl diphosphate = 2,3-bis-O-(geranylgeranyl)-sn-glycerol 1-phosphate + diphosphate</text>
        <dbReference type="Rhea" id="RHEA:18109"/>
        <dbReference type="ChEBI" id="CHEBI:33019"/>
        <dbReference type="ChEBI" id="CHEBI:57677"/>
        <dbReference type="ChEBI" id="CHEBI:58756"/>
        <dbReference type="ChEBI" id="CHEBI:58837"/>
        <dbReference type="EC" id="2.5.1.42"/>
    </reaction>
</comment>
<comment type="cofactor">
    <cofactor evidence="1">
        <name>Mg(2+)</name>
        <dbReference type="ChEBI" id="CHEBI:18420"/>
    </cofactor>
</comment>
<comment type="pathway">
    <text evidence="1">Membrane lipid metabolism; glycerophospholipid metabolism.</text>
</comment>
<comment type="subcellular location">
    <subcellularLocation>
        <location evidence="1">Cell membrane</location>
        <topology evidence="1">Multi-pass membrane protein</topology>
    </subcellularLocation>
</comment>
<comment type="similarity">
    <text evidence="1">Belongs to the UbiA prenyltransferase family. DGGGP synthase subfamily.</text>
</comment>
<organism>
    <name type="scientific">Methanocaldococcus jannaschii (strain ATCC 43067 / DSM 2661 / JAL-1 / JCM 10045 / NBRC 100440)</name>
    <name type="common">Methanococcus jannaschii</name>
    <dbReference type="NCBI Taxonomy" id="243232"/>
    <lineage>
        <taxon>Archaea</taxon>
        <taxon>Methanobacteriati</taxon>
        <taxon>Methanobacteriota</taxon>
        <taxon>Methanomada group</taxon>
        <taxon>Methanococci</taxon>
        <taxon>Methanococcales</taxon>
        <taxon>Methanocaldococcaceae</taxon>
        <taxon>Methanocaldococcus</taxon>
    </lineage>
</organism>
<gene>
    <name type="ordered locus">MJ0279</name>
</gene>
<keyword id="KW-0002">3D-structure</keyword>
<keyword id="KW-1003">Cell membrane</keyword>
<keyword id="KW-0444">Lipid biosynthesis</keyword>
<keyword id="KW-0443">Lipid metabolism</keyword>
<keyword id="KW-0460">Magnesium</keyword>
<keyword id="KW-0472">Membrane</keyword>
<keyword id="KW-0594">Phospholipid biosynthesis</keyword>
<keyword id="KW-1208">Phospholipid metabolism</keyword>
<keyword id="KW-1185">Reference proteome</keyword>
<keyword id="KW-0808">Transferase</keyword>
<keyword id="KW-0812">Transmembrane</keyword>
<keyword id="KW-1133">Transmembrane helix</keyword>